<keyword id="KW-0687">Ribonucleoprotein</keyword>
<keyword id="KW-0689">Ribosomal protein</keyword>
<keyword id="KW-0694">RNA-binding</keyword>
<keyword id="KW-0699">rRNA-binding</keyword>
<feature type="chain" id="PRO_0000322278" description="Small ribosomal subunit protein uS4">
    <location>
        <begin position="1"/>
        <end position="208"/>
    </location>
</feature>
<feature type="domain" description="S4 RNA-binding" evidence="1">
    <location>
        <begin position="98"/>
        <end position="163"/>
    </location>
</feature>
<name>RS4_CALS8</name>
<dbReference type="EMBL" id="CP000679">
    <property type="protein sequence ID" value="ABP67838.1"/>
    <property type="molecule type" value="Genomic_DNA"/>
</dbReference>
<dbReference type="RefSeq" id="WP_011917764.1">
    <property type="nucleotide sequence ID" value="NC_009437.1"/>
</dbReference>
<dbReference type="SMR" id="A4XLQ3"/>
<dbReference type="STRING" id="351627.Csac_2260"/>
<dbReference type="KEGG" id="csc:Csac_2260"/>
<dbReference type="eggNOG" id="COG0522">
    <property type="taxonomic scope" value="Bacteria"/>
</dbReference>
<dbReference type="HOGENOM" id="CLU_092403_0_2_9"/>
<dbReference type="OrthoDB" id="9803672at2"/>
<dbReference type="Proteomes" id="UP000000256">
    <property type="component" value="Chromosome"/>
</dbReference>
<dbReference type="GO" id="GO:0015935">
    <property type="term" value="C:small ribosomal subunit"/>
    <property type="evidence" value="ECO:0007669"/>
    <property type="project" value="InterPro"/>
</dbReference>
<dbReference type="GO" id="GO:0019843">
    <property type="term" value="F:rRNA binding"/>
    <property type="evidence" value="ECO:0007669"/>
    <property type="project" value="UniProtKB-UniRule"/>
</dbReference>
<dbReference type="GO" id="GO:0003735">
    <property type="term" value="F:structural constituent of ribosome"/>
    <property type="evidence" value="ECO:0007669"/>
    <property type="project" value="InterPro"/>
</dbReference>
<dbReference type="GO" id="GO:0042274">
    <property type="term" value="P:ribosomal small subunit biogenesis"/>
    <property type="evidence" value="ECO:0007669"/>
    <property type="project" value="TreeGrafter"/>
</dbReference>
<dbReference type="GO" id="GO:0006412">
    <property type="term" value="P:translation"/>
    <property type="evidence" value="ECO:0007669"/>
    <property type="project" value="UniProtKB-UniRule"/>
</dbReference>
<dbReference type="CDD" id="cd00165">
    <property type="entry name" value="S4"/>
    <property type="match status" value="1"/>
</dbReference>
<dbReference type="FunFam" id="1.10.1050.10:FF:000001">
    <property type="entry name" value="30S ribosomal protein S4"/>
    <property type="match status" value="1"/>
</dbReference>
<dbReference type="FunFam" id="3.10.290.10:FF:000001">
    <property type="entry name" value="30S ribosomal protein S4"/>
    <property type="match status" value="1"/>
</dbReference>
<dbReference type="Gene3D" id="1.10.1050.10">
    <property type="entry name" value="Ribosomal Protein S4 Delta 41, Chain A, domain 1"/>
    <property type="match status" value="1"/>
</dbReference>
<dbReference type="Gene3D" id="3.10.290.10">
    <property type="entry name" value="RNA-binding S4 domain"/>
    <property type="match status" value="1"/>
</dbReference>
<dbReference type="HAMAP" id="MF_01306_B">
    <property type="entry name" value="Ribosomal_uS4_B"/>
    <property type="match status" value="1"/>
</dbReference>
<dbReference type="InterPro" id="IPR022801">
    <property type="entry name" value="Ribosomal_uS4"/>
</dbReference>
<dbReference type="InterPro" id="IPR005709">
    <property type="entry name" value="Ribosomal_uS4_bac-type"/>
</dbReference>
<dbReference type="InterPro" id="IPR018079">
    <property type="entry name" value="Ribosomal_uS4_CS"/>
</dbReference>
<dbReference type="InterPro" id="IPR001912">
    <property type="entry name" value="Ribosomal_uS4_N"/>
</dbReference>
<dbReference type="InterPro" id="IPR002942">
    <property type="entry name" value="S4_RNA-bd"/>
</dbReference>
<dbReference type="InterPro" id="IPR036986">
    <property type="entry name" value="S4_RNA-bd_sf"/>
</dbReference>
<dbReference type="NCBIfam" id="NF003717">
    <property type="entry name" value="PRK05327.1"/>
    <property type="match status" value="1"/>
</dbReference>
<dbReference type="NCBIfam" id="TIGR01017">
    <property type="entry name" value="rpsD_bact"/>
    <property type="match status" value="1"/>
</dbReference>
<dbReference type="PANTHER" id="PTHR11831">
    <property type="entry name" value="30S 40S RIBOSOMAL PROTEIN"/>
    <property type="match status" value="1"/>
</dbReference>
<dbReference type="PANTHER" id="PTHR11831:SF4">
    <property type="entry name" value="SMALL RIBOSOMAL SUBUNIT PROTEIN US4M"/>
    <property type="match status" value="1"/>
</dbReference>
<dbReference type="Pfam" id="PF00163">
    <property type="entry name" value="Ribosomal_S4"/>
    <property type="match status" value="1"/>
</dbReference>
<dbReference type="Pfam" id="PF01479">
    <property type="entry name" value="S4"/>
    <property type="match status" value="1"/>
</dbReference>
<dbReference type="SMART" id="SM01390">
    <property type="entry name" value="Ribosomal_S4"/>
    <property type="match status" value="1"/>
</dbReference>
<dbReference type="SMART" id="SM00363">
    <property type="entry name" value="S4"/>
    <property type="match status" value="1"/>
</dbReference>
<dbReference type="SUPFAM" id="SSF55174">
    <property type="entry name" value="Alpha-L RNA-binding motif"/>
    <property type="match status" value="1"/>
</dbReference>
<dbReference type="PROSITE" id="PS00632">
    <property type="entry name" value="RIBOSOMAL_S4"/>
    <property type="match status" value="1"/>
</dbReference>
<dbReference type="PROSITE" id="PS50889">
    <property type="entry name" value="S4"/>
    <property type="match status" value="1"/>
</dbReference>
<comment type="function">
    <text evidence="1">One of the primary rRNA binding proteins, it binds directly to 16S rRNA where it nucleates assembly of the body of the 30S subunit.</text>
</comment>
<comment type="function">
    <text evidence="1">With S5 and S12 plays an important role in translational accuracy.</text>
</comment>
<comment type="subunit">
    <text evidence="1">Part of the 30S ribosomal subunit. Contacts protein S5. The interaction surface between S4 and S5 is involved in control of translational fidelity.</text>
</comment>
<comment type="similarity">
    <text evidence="1">Belongs to the universal ribosomal protein uS4 family.</text>
</comment>
<sequence>MSKYIGPDCRLCRREGMKLFLKGDRCYTEKCAFAKRPYPPGQHGQERKKLSEYGMQLREKQKVKRIYGVLETQFRRYFEMAEKMKGIAGENLLSLLERRLDNVVYRLGFASSRGEARVLVSHAHFKVNGKTVNIPSYLVDVGDVIEVKEKSKSKPRFIEIKEKYAKRPSPKWLEKDAENLVGKVIALPTREDIDMPIKEHLIVELYSK</sequence>
<reference key="1">
    <citation type="submission" date="2007-04" db="EMBL/GenBank/DDBJ databases">
        <title>Genome sequence of the thermophilic hydrogen-producing bacterium Caldicellulosiruptor saccharolyticus DSM 8903.</title>
        <authorList>
            <person name="Copeland A."/>
            <person name="Lucas S."/>
            <person name="Lapidus A."/>
            <person name="Barry K."/>
            <person name="Detter J.C."/>
            <person name="Glavina del Rio T."/>
            <person name="Hammon N."/>
            <person name="Israni S."/>
            <person name="Dalin E."/>
            <person name="Tice H."/>
            <person name="Pitluck S."/>
            <person name="Kiss H."/>
            <person name="Brettin T."/>
            <person name="Bruce D."/>
            <person name="Han C."/>
            <person name="Schmutz J."/>
            <person name="Larimer F."/>
            <person name="Land M."/>
            <person name="Hauser L."/>
            <person name="Kyrpides N."/>
            <person name="Lykidis A."/>
            <person name="van de Werken H.J.G."/>
            <person name="Verhaart M.R.A."/>
            <person name="VanFossen A.L."/>
            <person name="Lewis D.L."/>
            <person name="Nichols J.D."/>
            <person name="Goorissen H.P."/>
            <person name="van Niel E.W.J."/>
            <person name="Stams F.J.M."/>
            <person name="Willquist K.U."/>
            <person name="Ward D.E."/>
            <person name="van der Oost J."/>
            <person name="Kelly R.M."/>
            <person name="Kengen S.M.W."/>
            <person name="Richardson P."/>
        </authorList>
    </citation>
    <scope>NUCLEOTIDE SEQUENCE [LARGE SCALE GENOMIC DNA]</scope>
    <source>
        <strain>ATCC 43494 / DSM 8903 / Tp8T 6331</strain>
    </source>
</reference>
<gene>
    <name evidence="1" type="primary">rpsD</name>
    <name type="ordered locus">Csac_2260</name>
</gene>
<evidence type="ECO:0000255" key="1">
    <source>
        <dbReference type="HAMAP-Rule" id="MF_01306"/>
    </source>
</evidence>
<evidence type="ECO:0000305" key="2"/>
<accession>A4XLQ3</accession>
<protein>
    <recommendedName>
        <fullName evidence="1">Small ribosomal subunit protein uS4</fullName>
    </recommendedName>
    <alternativeName>
        <fullName evidence="2">30S ribosomal protein S4</fullName>
    </alternativeName>
</protein>
<proteinExistence type="inferred from homology"/>
<organism>
    <name type="scientific">Caldicellulosiruptor saccharolyticus (strain ATCC 43494 / DSM 8903 / Tp8T 6331)</name>
    <dbReference type="NCBI Taxonomy" id="351627"/>
    <lineage>
        <taxon>Bacteria</taxon>
        <taxon>Bacillati</taxon>
        <taxon>Bacillota</taxon>
        <taxon>Bacillota incertae sedis</taxon>
        <taxon>Caldicellulosiruptorales</taxon>
        <taxon>Caldicellulosiruptoraceae</taxon>
        <taxon>Caldicellulosiruptor</taxon>
    </lineage>
</organism>